<accession>B0S0L6</accession>
<proteinExistence type="inferred from homology"/>
<sequence>MDNLIQKMSEIYSDLHNSNNLIHCLTNAISINDMANAVLSIGQSPFMADNPREVEDVTRKSDSLLVNLGNITDYRIESIKKSVRIANENNIPITLDLVGVSASKLRLDLTLDILKNHTITCIKGNYSEIKSLFIKDLSTKGVDSQKLEVDDVINCCKNLHEKYDSIIVATGQTDIVCANEIYLLNNGDDRLSKITATGCVVGSLIACTLSVSQSIKACVLAISMMNISCEMVDKSVGLSSFKLGLYDNLSRIKWEQIKENIDAKKVES</sequence>
<dbReference type="EC" id="2.7.1.50" evidence="1"/>
<dbReference type="EMBL" id="AP008971">
    <property type="protein sequence ID" value="BAG07795.1"/>
    <property type="molecule type" value="Genomic_DNA"/>
</dbReference>
<dbReference type="RefSeq" id="WP_012290367.1">
    <property type="nucleotide sequence ID" value="NC_010376.1"/>
</dbReference>
<dbReference type="SMR" id="B0S0L6"/>
<dbReference type="STRING" id="334413.FMG_0377"/>
<dbReference type="KEGG" id="fma:FMG_0377"/>
<dbReference type="eggNOG" id="COG2145">
    <property type="taxonomic scope" value="Bacteria"/>
</dbReference>
<dbReference type="HOGENOM" id="CLU_019943_0_0_9"/>
<dbReference type="UniPathway" id="UPA00060">
    <property type="reaction ID" value="UER00139"/>
</dbReference>
<dbReference type="Proteomes" id="UP000001319">
    <property type="component" value="Chromosome"/>
</dbReference>
<dbReference type="GO" id="GO:0005524">
    <property type="term" value="F:ATP binding"/>
    <property type="evidence" value="ECO:0007669"/>
    <property type="project" value="UniProtKB-UniRule"/>
</dbReference>
<dbReference type="GO" id="GO:0004417">
    <property type="term" value="F:hydroxyethylthiazole kinase activity"/>
    <property type="evidence" value="ECO:0007669"/>
    <property type="project" value="UniProtKB-UniRule"/>
</dbReference>
<dbReference type="GO" id="GO:0000287">
    <property type="term" value="F:magnesium ion binding"/>
    <property type="evidence" value="ECO:0007669"/>
    <property type="project" value="UniProtKB-UniRule"/>
</dbReference>
<dbReference type="GO" id="GO:0009228">
    <property type="term" value="P:thiamine biosynthetic process"/>
    <property type="evidence" value="ECO:0007669"/>
    <property type="project" value="UniProtKB-KW"/>
</dbReference>
<dbReference type="GO" id="GO:0009229">
    <property type="term" value="P:thiamine diphosphate biosynthetic process"/>
    <property type="evidence" value="ECO:0007669"/>
    <property type="project" value="UniProtKB-UniRule"/>
</dbReference>
<dbReference type="CDD" id="cd01170">
    <property type="entry name" value="THZ_kinase"/>
    <property type="match status" value="1"/>
</dbReference>
<dbReference type="Gene3D" id="3.40.1190.20">
    <property type="match status" value="1"/>
</dbReference>
<dbReference type="HAMAP" id="MF_00228">
    <property type="entry name" value="Thz_kinase"/>
    <property type="match status" value="1"/>
</dbReference>
<dbReference type="InterPro" id="IPR000417">
    <property type="entry name" value="Hyethyz_kinase"/>
</dbReference>
<dbReference type="InterPro" id="IPR029056">
    <property type="entry name" value="Ribokinase-like"/>
</dbReference>
<dbReference type="NCBIfam" id="NF006830">
    <property type="entry name" value="PRK09355.1"/>
    <property type="match status" value="1"/>
</dbReference>
<dbReference type="Pfam" id="PF02110">
    <property type="entry name" value="HK"/>
    <property type="match status" value="1"/>
</dbReference>
<dbReference type="PIRSF" id="PIRSF000513">
    <property type="entry name" value="Thz_kinase"/>
    <property type="match status" value="1"/>
</dbReference>
<dbReference type="PRINTS" id="PR01099">
    <property type="entry name" value="HYETHTZKNASE"/>
</dbReference>
<dbReference type="SUPFAM" id="SSF53613">
    <property type="entry name" value="Ribokinase-like"/>
    <property type="match status" value="1"/>
</dbReference>
<organism>
    <name type="scientific">Finegoldia magna (strain ATCC 29328 / DSM 20472 / WAL 2508)</name>
    <name type="common">Peptostreptococcus magnus</name>
    <dbReference type="NCBI Taxonomy" id="334413"/>
    <lineage>
        <taxon>Bacteria</taxon>
        <taxon>Bacillati</taxon>
        <taxon>Bacillota</taxon>
        <taxon>Tissierellia</taxon>
        <taxon>Tissierellales</taxon>
        <taxon>Peptoniphilaceae</taxon>
        <taxon>Finegoldia</taxon>
    </lineage>
</organism>
<keyword id="KW-0067">ATP-binding</keyword>
<keyword id="KW-0418">Kinase</keyword>
<keyword id="KW-0460">Magnesium</keyword>
<keyword id="KW-0479">Metal-binding</keyword>
<keyword id="KW-0547">Nucleotide-binding</keyword>
<keyword id="KW-1185">Reference proteome</keyword>
<keyword id="KW-0784">Thiamine biosynthesis</keyword>
<keyword id="KW-0808">Transferase</keyword>
<reference key="1">
    <citation type="journal article" date="2008" name="DNA Res.">
        <title>Complete genome sequence of Finegoldia magna, an anaerobic opportunistic pathogen.</title>
        <authorList>
            <person name="Goto T."/>
            <person name="Yamashita A."/>
            <person name="Hirakawa H."/>
            <person name="Matsutani M."/>
            <person name="Todo K."/>
            <person name="Ohshima K."/>
            <person name="Toh H."/>
            <person name="Miyamoto K."/>
            <person name="Kuhara S."/>
            <person name="Hattori M."/>
            <person name="Shimizu T."/>
            <person name="Akimoto S."/>
        </authorList>
    </citation>
    <scope>NUCLEOTIDE SEQUENCE [LARGE SCALE GENOMIC DNA]</scope>
    <source>
        <strain>ATCC 29328 / DSM 20472 / WAL 2508</strain>
    </source>
</reference>
<protein>
    <recommendedName>
        <fullName evidence="1">Hydroxyethylthiazole kinase</fullName>
        <ecNumber evidence="1">2.7.1.50</ecNumber>
    </recommendedName>
    <alternativeName>
        <fullName evidence="1">4-methyl-5-beta-hydroxyethylthiazole kinase</fullName>
        <shortName evidence="1">TH kinase</shortName>
        <shortName evidence="1">Thz kinase</shortName>
    </alternativeName>
</protein>
<gene>
    <name evidence="1" type="primary">thiM</name>
    <name type="ordered locus">FMG_0377</name>
</gene>
<name>THIM_FINM2</name>
<evidence type="ECO:0000255" key="1">
    <source>
        <dbReference type="HAMAP-Rule" id="MF_00228"/>
    </source>
</evidence>
<comment type="function">
    <text evidence="1">Catalyzes the phosphorylation of the hydroxyl group of 4-methyl-5-beta-hydroxyethylthiazole (THZ).</text>
</comment>
<comment type="catalytic activity">
    <reaction evidence="1">
        <text>5-(2-hydroxyethyl)-4-methylthiazole + ATP = 4-methyl-5-(2-phosphooxyethyl)-thiazole + ADP + H(+)</text>
        <dbReference type="Rhea" id="RHEA:24212"/>
        <dbReference type="ChEBI" id="CHEBI:15378"/>
        <dbReference type="ChEBI" id="CHEBI:17957"/>
        <dbReference type="ChEBI" id="CHEBI:30616"/>
        <dbReference type="ChEBI" id="CHEBI:58296"/>
        <dbReference type="ChEBI" id="CHEBI:456216"/>
        <dbReference type="EC" id="2.7.1.50"/>
    </reaction>
</comment>
<comment type="cofactor">
    <cofactor evidence="1">
        <name>Mg(2+)</name>
        <dbReference type="ChEBI" id="CHEBI:18420"/>
    </cofactor>
</comment>
<comment type="pathway">
    <text evidence="1">Cofactor biosynthesis; thiamine diphosphate biosynthesis; 4-methyl-5-(2-phosphoethyl)-thiazole from 5-(2-hydroxyethyl)-4-methylthiazole: step 1/1.</text>
</comment>
<comment type="similarity">
    <text evidence="1">Belongs to the Thz kinase family.</text>
</comment>
<feature type="chain" id="PRO_0000383862" description="Hydroxyethylthiazole kinase">
    <location>
        <begin position="1"/>
        <end position="268"/>
    </location>
</feature>
<feature type="binding site" evidence="1">
    <location>
        <position position="47"/>
    </location>
    <ligand>
        <name>substrate</name>
    </ligand>
</feature>
<feature type="binding site" evidence="1">
    <location>
        <position position="123"/>
    </location>
    <ligand>
        <name>ATP</name>
        <dbReference type="ChEBI" id="CHEBI:30616"/>
    </ligand>
</feature>
<feature type="binding site" evidence="1">
    <location>
        <position position="170"/>
    </location>
    <ligand>
        <name>ATP</name>
        <dbReference type="ChEBI" id="CHEBI:30616"/>
    </ligand>
</feature>
<feature type="binding site" evidence="1">
    <location>
        <position position="196"/>
    </location>
    <ligand>
        <name>substrate</name>
    </ligand>
</feature>